<name>NUOI_NEIMB</name>
<sequence length="159" mass="18156">MANLVKTFLLGELVKGMGVTLKNFFARKDTIYFPEEKTPQSVRFRGLHAQRRYPNGEERCIACKLCEAVCPAMAINIESEEREDGTRRTKRYDIDLTKCIFCGFCEEACPTDAIVETHIFEYHGEKKGDLHMTKPILLAIGDKYEAEIAKRKAADAPYR</sequence>
<dbReference type="EC" id="7.1.1.-" evidence="1"/>
<dbReference type="EMBL" id="AE002098">
    <property type="protein sequence ID" value="AAF40705.1"/>
    <property type="molecule type" value="Genomic_DNA"/>
</dbReference>
<dbReference type="RefSeq" id="NP_273307.1">
    <property type="nucleotide sequence ID" value="NC_003112.2"/>
</dbReference>
<dbReference type="RefSeq" id="WP_002216341.1">
    <property type="nucleotide sequence ID" value="NC_003112.2"/>
</dbReference>
<dbReference type="SMR" id="Q7DDS1"/>
<dbReference type="FunCoup" id="Q7DDS1">
    <property type="interactions" value="363"/>
</dbReference>
<dbReference type="STRING" id="122586.NMB0251"/>
<dbReference type="PaxDb" id="122586-NMB0251"/>
<dbReference type="GeneID" id="93387338"/>
<dbReference type="KEGG" id="nme:NMB0251"/>
<dbReference type="PATRIC" id="fig|122586.8.peg.314"/>
<dbReference type="HOGENOM" id="CLU_067218_5_1_4"/>
<dbReference type="InParanoid" id="Q7DDS1"/>
<dbReference type="OrthoDB" id="9808559at2"/>
<dbReference type="PRO" id="PR:Q7DDS1"/>
<dbReference type="Proteomes" id="UP000000425">
    <property type="component" value="Chromosome"/>
</dbReference>
<dbReference type="GO" id="GO:0005886">
    <property type="term" value="C:plasma membrane"/>
    <property type="evidence" value="ECO:0007669"/>
    <property type="project" value="UniProtKB-SubCell"/>
</dbReference>
<dbReference type="GO" id="GO:0051539">
    <property type="term" value="F:4 iron, 4 sulfur cluster binding"/>
    <property type="evidence" value="ECO:0007669"/>
    <property type="project" value="UniProtKB-KW"/>
</dbReference>
<dbReference type="GO" id="GO:0005506">
    <property type="term" value="F:iron ion binding"/>
    <property type="evidence" value="ECO:0007669"/>
    <property type="project" value="UniProtKB-UniRule"/>
</dbReference>
<dbReference type="GO" id="GO:0050136">
    <property type="term" value="F:NADH:ubiquinone reductase (non-electrogenic) activity"/>
    <property type="evidence" value="ECO:0007669"/>
    <property type="project" value="UniProtKB-UniRule"/>
</dbReference>
<dbReference type="GO" id="GO:0048038">
    <property type="term" value="F:quinone binding"/>
    <property type="evidence" value="ECO:0007669"/>
    <property type="project" value="UniProtKB-KW"/>
</dbReference>
<dbReference type="GO" id="GO:0009060">
    <property type="term" value="P:aerobic respiration"/>
    <property type="evidence" value="ECO:0000318"/>
    <property type="project" value="GO_Central"/>
</dbReference>
<dbReference type="FunFam" id="3.30.70.3270:FF:000003">
    <property type="entry name" value="NADH-quinone oxidoreductase subunit I"/>
    <property type="match status" value="1"/>
</dbReference>
<dbReference type="Gene3D" id="3.30.70.3270">
    <property type="match status" value="1"/>
</dbReference>
<dbReference type="HAMAP" id="MF_01351">
    <property type="entry name" value="NDH1_NuoI"/>
    <property type="match status" value="1"/>
</dbReference>
<dbReference type="InterPro" id="IPR017896">
    <property type="entry name" value="4Fe4S_Fe-S-bd"/>
</dbReference>
<dbReference type="InterPro" id="IPR017900">
    <property type="entry name" value="4Fe4S_Fe_S_CS"/>
</dbReference>
<dbReference type="InterPro" id="IPR010226">
    <property type="entry name" value="NADH_quinone_OxRdtase_chainI"/>
</dbReference>
<dbReference type="NCBIfam" id="TIGR01971">
    <property type="entry name" value="NuoI"/>
    <property type="match status" value="1"/>
</dbReference>
<dbReference type="NCBIfam" id="NF004538">
    <property type="entry name" value="PRK05888.1-4"/>
    <property type="match status" value="1"/>
</dbReference>
<dbReference type="NCBIfam" id="NF004539">
    <property type="entry name" value="PRK05888.1-5"/>
    <property type="match status" value="1"/>
</dbReference>
<dbReference type="PANTHER" id="PTHR10849:SF20">
    <property type="entry name" value="NADH DEHYDROGENASE [UBIQUINONE] IRON-SULFUR PROTEIN 8, MITOCHONDRIAL"/>
    <property type="match status" value="1"/>
</dbReference>
<dbReference type="PANTHER" id="PTHR10849">
    <property type="entry name" value="NADH DEHYDROGENASE UBIQUINONE IRON-SULFUR PROTEIN 8, MITOCHONDRIAL"/>
    <property type="match status" value="1"/>
</dbReference>
<dbReference type="Pfam" id="PF12838">
    <property type="entry name" value="Fer4_7"/>
    <property type="match status" value="1"/>
</dbReference>
<dbReference type="SUPFAM" id="SSF54862">
    <property type="entry name" value="4Fe-4S ferredoxins"/>
    <property type="match status" value="1"/>
</dbReference>
<dbReference type="PROSITE" id="PS00198">
    <property type="entry name" value="4FE4S_FER_1"/>
    <property type="match status" value="2"/>
</dbReference>
<dbReference type="PROSITE" id="PS51379">
    <property type="entry name" value="4FE4S_FER_2"/>
    <property type="match status" value="2"/>
</dbReference>
<feature type="chain" id="PRO_0000250917" description="NADH-quinone oxidoreductase subunit I">
    <location>
        <begin position="1"/>
        <end position="159"/>
    </location>
</feature>
<feature type="domain" description="4Fe-4S ferredoxin-type 1" evidence="1">
    <location>
        <begin position="50"/>
        <end position="80"/>
    </location>
</feature>
<feature type="domain" description="4Fe-4S ferredoxin-type 2" evidence="1">
    <location>
        <begin position="90"/>
        <end position="119"/>
    </location>
</feature>
<feature type="binding site" evidence="1">
    <location>
        <position position="60"/>
    </location>
    <ligand>
        <name>[4Fe-4S] cluster</name>
        <dbReference type="ChEBI" id="CHEBI:49883"/>
        <label>1</label>
    </ligand>
</feature>
<feature type="binding site" evidence="1">
    <location>
        <position position="63"/>
    </location>
    <ligand>
        <name>[4Fe-4S] cluster</name>
        <dbReference type="ChEBI" id="CHEBI:49883"/>
        <label>1</label>
    </ligand>
</feature>
<feature type="binding site" evidence="1">
    <location>
        <position position="66"/>
    </location>
    <ligand>
        <name>[4Fe-4S] cluster</name>
        <dbReference type="ChEBI" id="CHEBI:49883"/>
        <label>1</label>
    </ligand>
</feature>
<feature type="binding site" evidence="1">
    <location>
        <position position="70"/>
    </location>
    <ligand>
        <name>[4Fe-4S] cluster</name>
        <dbReference type="ChEBI" id="CHEBI:49883"/>
        <label>2</label>
    </ligand>
</feature>
<feature type="binding site" evidence="1">
    <location>
        <position position="99"/>
    </location>
    <ligand>
        <name>[4Fe-4S] cluster</name>
        <dbReference type="ChEBI" id="CHEBI:49883"/>
        <label>2</label>
    </ligand>
</feature>
<feature type="binding site" evidence="1">
    <location>
        <position position="102"/>
    </location>
    <ligand>
        <name>[4Fe-4S] cluster</name>
        <dbReference type="ChEBI" id="CHEBI:49883"/>
        <label>2</label>
    </ligand>
</feature>
<feature type="binding site" evidence="1">
    <location>
        <position position="105"/>
    </location>
    <ligand>
        <name>[4Fe-4S] cluster</name>
        <dbReference type="ChEBI" id="CHEBI:49883"/>
        <label>2</label>
    </ligand>
</feature>
<feature type="binding site" evidence="1">
    <location>
        <position position="109"/>
    </location>
    <ligand>
        <name>[4Fe-4S] cluster</name>
        <dbReference type="ChEBI" id="CHEBI:49883"/>
        <label>1</label>
    </ligand>
</feature>
<organism>
    <name type="scientific">Neisseria meningitidis serogroup B (strain ATCC BAA-335 / MC58)</name>
    <dbReference type="NCBI Taxonomy" id="122586"/>
    <lineage>
        <taxon>Bacteria</taxon>
        <taxon>Pseudomonadati</taxon>
        <taxon>Pseudomonadota</taxon>
        <taxon>Betaproteobacteria</taxon>
        <taxon>Neisseriales</taxon>
        <taxon>Neisseriaceae</taxon>
        <taxon>Neisseria</taxon>
    </lineage>
</organism>
<comment type="function">
    <text evidence="1">NDH-1 shuttles electrons from NADH, via FMN and iron-sulfur (Fe-S) centers, to quinones in the respiratory chain. The immediate electron acceptor for the enzyme in this species is believed to be ubiquinone. Couples the redox reaction to proton translocation (for every two electrons transferred, four hydrogen ions are translocated across the cytoplasmic membrane), and thus conserves the redox energy in a proton gradient.</text>
</comment>
<comment type="catalytic activity">
    <reaction evidence="1">
        <text>a quinone + NADH + 5 H(+)(in) = a quinol + NAD(+) + 4 H(+)(out)</text>
        <dbReference type="Rhea" id="RHEA:57888"/>
        <dbReference type="ChEBI" id="CHEBI:15378"/>
        <dbReference type="ChEBI" id="CHEBI:24646"/>
        <dbReference type="ChEBI" id="CHEBI:57540"/>
        <dbReference type="ChEBI" id="CHEBI:57945"/>
        <dbReference type="ChEBI" id="CHEBI:132124"/>
    </reaction>
</comment>
<comment type="cofactor">
    <cofactor evidence="1">
        <name>[4Fe-4S] cluster</name>
        <dbReference type="ChEBI" id="CHEBI:49883"/>
    </cofactor>
    <text evidence="1">Binds 2 [4Fe-4S] clusters per subunit.</text>
</comment>
<comment type="subunit">
    <text evidence="1">NDH-1 is composed of 14 different subunits. Subunits NuoA, H, J, K, L, M, N constitute the membrane sector of the complex.</text>
</comment>
<comment type="subcellular location">
    <subcellularLocation>
        <location evidence="1">Cell inner membrane</location>
        <topology evidence="1">Peripheral membrane protein</topology>
    </subcellularLocation>
</comment>
<comment type="similarity">
    <text evidence="1">Belongs to the complex I 23 kDa subunit family.</text>
</comment>
<gene>
    <name evidence="1" type="primary">nuoI</name>
    <name type="ordered locus">NMB0251</name>
</gene>
<accession>Q7DDS1</accession>
<proteinExistence type="inferred from homology"/>
<evidence type="ECO:0000255" key="1">
    <source>
        <dbReference type="HAMAP-Rule" id="MF_01351"/>
    </source>
</evidence>
<reference key="1">
    <citation type="journal article" date="2000" name="Science">
        <title>Complete genome sequence of Neisseria meningitidis serogroup B strain MC58.</title>
        <authorList>
            <person name="Tettelin H."/>
            <person name="Saunders N.J."/>
            <person name="Heidelberg J.F."/>
            <person name="Jeffries A.C."/>
            <person name="Nelson K.E."/>
            <person name="Eisen J.A."/>
            <person name="Ketchum K.A."/>
            <person name="Hood D.W."/>
            <person name="Peden J.F."/>
            <person name="Dodson R.J."/>
            <person name="Nelson W.C."/>
            <person name="Gwinn M.L."/>
            <person name="DeBoy R.T."/>
            <person name="Peterson J.D."/>
            <person name="Hickey E.K."/>
            <person name="Haft D.H."/>
            <person name="Salzberg S.L."/>
            <person name="White O."/>
            <person name="Fleischmann R.D."/>
            <person name="Dougherty B.A."/>
            <person name="Mason T.M."/>
            <person name="Ciecko A."/>
            <person name="Parksey D.S."/>
            <person name="Blair E."/>
            <person name="Cittone H."/>
            <person name="Clark E.B."/>
            <person name="Cotton M.D."/>
            <person name="Utterback T.R."/>
            <person name="Khouri H.M."/>
            <person name="Qin H."/>
            <person name="Vamathevan J.J."/>
            <person name="Gill J."/>
            <person name="Scarlato V."/>
            <person name="Masignani V."/>
            <person name="Pizza M."/>
            <person name="Grandi G."/>
            <person name="Sun L."/>
            <person name="Smith H.O."/>
            <person name="Fraser C.M."/>
            <person name="Moxon E.R."/>
            <person name="Rappuoli R."/>
            <person name="Venter J.C."/>
        </authorList>
    </citation>
    <scope>NUCLEOTIDE SEQUENCE [LARGE SCALE GENOMIC DNA]</scope>
    <source>
        <strain>ATCC BAA-335 / MC58</strain>
    </source>
</reference>
<protein>
    <recommendedName>
        <fullName evidence="1">NADH-quinone oxidoreductase subunit I</fullName>
        <ecNumber evidence="1">7.1.1.-</ecNumber>
    </recommendedName>
    <alternativeName>
        <fullName evidence="1">NADH dehydrogenase I subunit I</fullName>
    </alternativeName>
    <alternativeName>
        <fullName evidence="1">NDH-1 subunit I</fullName>
    </alternativeName>
</protein>
<keyword id="KW-0004">4Fe-4S</keyword>
<keyword id="KW-0997">Cell inner membrane</keyword>
<keyword id="KW-1003">Cell membrane</keyword>
<keyword id="KW-0408">Iron</keyword>
<keyword id="KW-0411">Iron-sulfur</keyword>
<keyword id="KW-0472">Membrane</keyword>
<keyword id="KW-0479">Metal-binding</keyword>
<keyword id="KW-0520">NAD</keyword>
<keyword id="KW-0874">Quinone</keyword>
<keyword id="KW-1185">Reference proteome</keyword>
<keyword id="KW-0677">Repeat</keyword>
<keyword id="KW-1278">Translocase</keyword>
<keyword id="KW-0830">Ubiquinone</keyword>